<dbReference type="EC" id="3.1.2.2" evidence="8"/>
<dbReference type="EC" id="3.1.1.2" evidence="14"/>
<dbReference type="EC" id="3.1.1.5" evidence="24 27"/>
<dbReference type="EC" id="3.1.2.14" evidence="8"/>
<dbReference type="EC" id="3.4.21.-" evidence="28"/>
<dbReference type="EMBL" id="L06182">
    <property type="protein sequence ID" value="AAA24664.1"/>
    <property type="molecule type" value="Genomic_DNA"/>
</dbReference>
<dbReference type="EMBL" id="D13180">
    <property type="protein sequence ID" value="BAA02475.1"/>
    <property type="molecule type" value="Genomic_DNA"/>
</dbReference>
<dbReference type="EMBL" id="U82664">
    <property type="protein sequence ID" value="AAB40248.1"/>
    <property type="status" value="ALT_INIT"/>
    <property type="molecule type" value="Genomic_DNA"/>
</dbReference>
<dbReference type="EMBL" id="U00096">
    <property type="protein sequence ID" value="AAC73596.1"/>
    <property type="molecule type" value="Genomic_DNA"/>
</dbReference>
<dbReference type="EMBL" id="AP009048">
    <property type="protein sequence ID" value="BAE76273.1"/>
    <property type="molecule type" value="Genomic_DNA"/>
</dbReference>
<dbReference type="PIR" id="A49699">
    <property type="entry name" value="A49699"/>
</dbReference>
<dbReference type="PIR" id="PX0045">
    <property type="entry name" value="PX0045"/>
</dbReference>
<dbReference type="RefSeq" id="NP_415027.1">
    <property type="nucleotide sequence ID" value="NC_000913.3"/>
</dbReference>
<dbReference type="PDB" id="1IVN">
    <property type="method" value="X-ray"/>
    <property type="resolution" value="1.90 A"/>
    <property type="chains" value="A=27-208"/>
</dbReference>
<dbReference type="PDB" id="1J00">
    <property type="method" value="X-ray"/>
    <property type="resolution" value="2.00 A"/>
    <property type="chains" value="A=27-208"/>
</dbReference>
<dbReference type="PDB" id="1JRL">
    <property type="method" value="X-ray"/>
    <property type="resolution" value="1.95 A"/>
    <property type="chains" value="A=27-208"/>
</dbReference>
<dbReference type="PDB" id="1U8U">
    <property type="method" value="X-ray"/>
    <property type="resolution" value="2.08 A"/>
    <property type="chains" value="A=27-208"/>
</dbReference>
<dbReference type="PDB" id="1V2G">
    <property type="method" value="X-ray"/>
    <property type="resolution" value="2.00 A"/>
    <property type="chains" value="A=27-208"/>
</dbReference>
<dbReference type="PDB" id="5TIC">
    <property type="method" value="X-ray"/>
    <property type="resolution" value="1.65 A"/>
    <property type="chains" value="A/B=28-208"/>
</dbReference>
<dbReference type="PDB" id="5TID">
    <property type="method" value="X-ray"/>
    <property type="resolution" value="1.20 A"/>
    <property type="chains" value="A=28-208"/>
</dbReference>
<dbReference type="PDB" id="5TIE">
    <property type="method" value="X-ray"/>
    <property type="resolution" value="1.15 A"/>
    <property type="chains" value="A=28-208"/>
</dbReference>
<dbReference type="PDB" id="5TIF">
    <property type="method" value="X-ray"/>
    <property type="resolution" value="0.97 A"/>
    <property type="chains" value="A=28-208"/>
</dbReference>
<dbReference type="PDB" id="6LFB">
    <property type="method" value="X-ray"/>
    <property type="resolution" value="1.99 A"/>
    <property type="chains" value="A=28-205"/>
</dbReference>
<dbReference type="PDB" id="6LFC">
    <property type="method" value="X-ray"/>
    <property type="resolution" value="2.70 A"/>
    <property type="chains" value="A/B/C/D/E/F=28-208"/>
</dbReference>
<dbReference type="PDBsum" id="1IVN"/>
<dbReference type="PDBsum" id="1J00"/>
<dbReference type="PDBsum" id="1JRL"/>
<dbReference type="PDBsum" id="1U8U"/>
<dbReference type="PDBsum" id="1V2G"/>
<dbReference type="PDBsum" id="5TIC"/>
<dbReference type="PDBsum" id="5TID"/>
<dbReference type="PDBsum" id="5TIE"/>
<dbReference type="PDBsum" id="5TIF"/>
<dbReference type="PDBsum" id="6LFB"/>
<dbReference type="PDBsum" id="6LFC"/>
<dbReference type="BMRB" id="P0ADA1"/>
<dbReference type="SMR" id="P0ADA1"/>
<dbReference type="BioGRID" id="4259854">
    <property type="interactions" value="5"/>
</dbReference>
<dbReference type="FunCoup" id="P0ADA1">
    <property type="interactions" value="122"/>
</dbReference>
<dbReference type="STRING" id="511145.b0494"/>
<dbReference type="DrugBank" id="DB02364">
    <property type="generic name" value="2-Amino-3-(Diethoxy-Phosphoryloxy)-Propionic Acid"/>
</dbReference>
<dbReference type="DrugBank" id="DB04519">
    <property type="generic name" value="Caprylic acid"/>
</dbReference>
<dbReference type="DrugBank" id="DB03366">
    <property type="generic name" value="Imidazole"/>
</dbReference>
<dbReference type="SwissLipids" id="SLP:000001818"/>
<dbReference type="MEROPS" id="X42.001"/>
<dbReference type="jPOST" id="P0ADA1"/>
<dbReference type="PaxDb" id="511145-b0494"/>
<dbReference type="EnsemblBacteria" id="AAC73596">
    <property type="protein sequence ID" value="AAC73596"/>
    <property type="gene ID" value="b0494"/>
</dbReference>
<dbReference type="GeneID" id="945127"/>
<dbReference type="KEGG" id="ecj:JW0483"/>
<dbReference type="KEGG" id="eco:b0494"/>
<dbReference type="PATRIC" id="fig|511145.12.peg.515"/>
<dbReference type="EchoBASE" id="EB1504"/>
<dbReference type="eggNOG" id="COG2755">
    <property type="taxonomic scope" value="Bacteria"/>
</dbReference>
<dbReference type="HOGENOM" id="CLU_051180_3_0_6"/>
<dbReference type="InParanoid" id="P0ADA1"/>
<dbReference type="OMA" id="MRIPPNY"/>
<dbReference type="PhylomeDB" id="P0ADA1"/>
<dbReference type="BioCyc" id="EcoCyc:THIOESTERI-MONOMER"/>
<dbReference type="BioCyc" id="MetaCyc:THIOESTERI-MONOMER"/>
<dbReference type="BRENDA" id="3.1.1.5">
    <property type="organism ID" value="2026"/>
</dbReference>
<dbReference type="BRENDA" id="3.1.2.2">
    <property type="organism ID" value="2026"/>
</dbReference>
<dbReference type="SABIO-RK" id="P0ADA1"/>
<dbReference type="EvolutionaryTrace" id="P0ADA1"/>
<dbReference type="PRO" id="PR:P0ADA1"/>
<dbReference type="Proteomes" id="UP000000625">
    <property type="component" value="Chromosome"/>
</dbReference>
<dbReference type="GO" id="GO:0030288">
    <property type="term" value="C:outer membrane-bounded periplasmic space"/>
    <property type="evidence" value="ECO:0000314"/>
    <property type="project" value="EcoCyc"/>
</dbReference>
<dbReference type="GO" id="GO:0004064">
    <property type="term" value="F:arylesterase activity"/>
    <property type="evidence" value="ECO:0007669"/>
    <property type="project" value="UniProtKB-EC"/>
</dbReference>
<dbReference type="GO" id="GO:0016297">
    <property type="term" value="F:fatty acyl-[ACP] hydrolase activity"/>
    <property type="evidence" value="ECO:0007669"/>
    <property type="project" value="UniProtKB-EC"/>
</dbReference>
<dbReference type="GO" id="GO:0042802">
    <property type="term" value="F:identical protein binding"/>
    <property type="evidence" value="ECO:0000314"/>
    <property type="project" value="EcoCyc"/>
</dbReference>
<dbReference type="GO" id="GO:0052816">
    <property type="term" value="F:long-chain fatty acyl-CoA hydrolase activity"/>
    <property type="evidence" value="ECO:0000314"/>
    <property type="project" value="EcoCyc"/>
</dbReference>
<dbReference type="GO" id="GO:0004622">
    <property type="term" value="F:lysophospholipase activity"/>
    <property type="evidence" value="ECO:0000314"/>
    <property type="project" value="EcoCyc"/>
</dbReference>
<dbReference type="GO" id="GO:0008233">
    <property type="term" value="F:peptidase activity"/>
    <property type="evidence" value="ECO:0000314"/>
    <property type="project" value="EcoCyc"/>
</dbReference>
<dbReference type="GO" id="GO:0006629">
    <property type="term" value="P:lipid metabolic process"/>
    <property type="evidence" value="ECO:0007669"/>
    <property type="project" value="UniProtKB-KW"/>
</dbReference>
<dbReference type="GO" id="GO:0006508">
    <property type="term" value="P:proteolysis"/>
    <property type="evidence" value="ECO:0007669"/>
    <property type="project" value="UniProtKB-KW"/>
</dbReference>
<dbReference type="CDD" id="cd01822">
    <property type="entry name" value="Lysophospholipase_L1_like"/>
    <property type="match status" value="1"/>
</dbReference>
<dbReference type="FunFam" id="3.40.50.1110:FF:000001">
    <property type="entry name" value="Multifunctional acyl-CoA thioesterase I"/>
    <property type="match status" value="1"/>
</dbReference>
<dbReference type="Gene3D" id="3.40.50.1110">
    <property type="entry name" value="SGNH hydrolase"/>
    <property type="match status" value="1"/>
</dbReference>
<dbReference type="InterPro" id="IPR051532">
    <property type="entry name" value="Ester_Hydrolysis_Enzymes"/>
</dbReference>
<dbReference type="InterPro" id="IPR008265">
    <property type="entry name" value="Lipase_GDSL_AS"/>
</dbReference>
<dbReference type="InterPro" id="IPR013830">
    <property type="entry name" value="SGNH_hydro"/>
</dbReference>
<dbReference type="InterPro" id="IPR036514">
    <property type="entry name" value="SGNH_hydro_sf"/>
</dbReference>
<dbReference type="NCBIfam" id="NF007819">
    <property type="entry name" value="PRK10528.1"/>
    <property type="match status" value="1"/>
</dbReference>
<dbReference type="PANTHER" id="PTHR30383">
    <property type="entry name" value="THIOESTERASE 1/PROTEASE 1/LYSOPHOSPHOLIPASE L1"/>
    <property type="match status" value="1"/>
</dbReference>
<dbReference type="PANTHER" id="PTHR30383:SF24">
    <property type="entry name" value="THIOESTERASE 1_PROTEASE 1_LYSOPHOSPHOLIPASE L1"/>
    <property type="match status" value="1"/>
</dbReference>
<dbReference type="Pfam" id="PF13472">
    <property type="entry name" value="Lipase_GDSL_2"/>
    <property type="match status" value="1"/>
</dbReference>
<dbReference type="SUPFAM" id="SSF52266">
    <property type="entry name" value="SGNH hydrolase"/>
    <property type="match status" value="1"/>
</dbReference>
<dbReference type="PROSITE" id="PS01098">
    <property type="entry name" value="LIPASE_GDSL_SER"/>
    <property type="match status" value="1"/>
</dbReference>
<organism>
    <name type="scientific">Escherichia coli (strain K12)</name>
    <dbReference type="NCBI Taxonomy" id="83333"/>
    <lineage>
        <taxon>Bacteria</taxon>
        <taxon>Pseudomonadati</taxon>
        <taxon>Pseudomonadota</taxon>
        <taxon>Gammaproteobacteria</taxon>
        <taxon>Enterobacterales</taxon>
        <taxon>Enterobacteriaceae</taxon>
        <taxon>Escherichia</taxon>
    </lineage>
</organism>
<accession>P0ADA1</accession>
<accession>P29679</accession>
<accession>P37331</accession>
<accession>P77125</accession>
<accession>Q2MBT3</accession>
<name>TESA_ECOLI</name>
<reference key="1">
    <citation type="journal article" date="1993" name="J. Biol. Chem.">
        <title>Escherichia coli thioesterase I, molecular cloning and sequencing of the structural gene and identification as a periplasmic enzyme.</title>
        <authorList>
            <person name="Cho H."/>
            <person name="Cronan J.E. Jr."/>
        </authorList>
    </citation>
    <scope>NUCLEOTIDE SEQUENCE [GENOMIC DNA]</scope>
    <scope>PROTEIN SEQUENCE OF N-TERMINUS</scope>
    <scope>FUNCTION AS A THIOESTERASE</scope>
    <scope>SUBCELLULAR LOCATION</scope>
    <scope>DISRUPTION PHENOTYPE</scope>
    <scope>ACTIVE SITE</scope>
    <scope>SUBUNIT</scope>
    <scope>NOMENCLATURE</scope>
    <source>
        <strain>K12 / W3110 / ATCC 27325 / DSM 5911</strain>
    </source>
</reference>
<reference key="2">
    <citation type="journal article" date="1993" name="J. Bacteriol.">
        <title>Molecular cloning, sequencing, and mapping of the gene encoding protease I and characterization of proteinase and proteinase-defective Escherichia coli mutants.</title>
        <authorList>
            <person name="Ichihara S."/>
            <person name="Matsubara Y."/>
            <person name="Kato C."/>
            <person name="Akasaka K."/>
            <person name="Mizushima S."/>
        </authorList>
    </citation>
    <scope>NUCLEOTIDE SEQUENCE [GENOMIC DNA]</scope>
    <scope>PROTEIN SEQUENCE OF 27-38</scope>
    <scope>FUNCTION AS A PROTEASE</scope>
    <scope>DISRUPTION PHENOTYPE</scope>
    <scope>SUBCELLULAR LOCATION</scope>
    <scope>SUBSTRATE SPECIFICITY</scope>
    <scope>NOMENCLATURE</scope>
    <source>
        <strain>K12</strain>
    </source>
</reference>
<reference key="3">
    <citation type="submission" date="1997-01" db="EMBL/GenBank/DDBJ databases">
        <title>Sequence of minutes 4-25 of Escherichia coli.</title>
        <authorList>
            <person name="Chung E."/>
            <person name="Allen E."/>
            <person name="Araujo R."/>
            <person name="Aparicio A.M."/>
            <person name="Davis K."/>
            <person name="Duncan M."/>
            <person name="Federspiel N."/>
            <person name="Hyman R."/>
            <person name="Kalman S."/>
            <person name="Komp C."/>
            <person name="Kurdi O."/>
            <person name="Lew H."/>
            <person name="Lin D."/>
            <person name="Namath A."/>
            <person name="Oefner P."/>
            <person name="Roberts D."/>
            <person name="Schramm S."/>
            <person name="Davis R.W."/>
        </authorList>
    </citation>
    <scope>NUCLEOTIDE SEQUENCE [LARGE SCALE GENOMIC DNA]</scope>
    <source>
        <strain>K12 / MG1655 / ATCC 47076</strain>
    </source>
</reference>
<reference key="4">
    <citation type="journal article" date="1997" name="Science">
        <title>The complete genome sequence of Escherichia coli K-12.</title>
        <authorList>
            <person name="Blattner F.R."/>
            <person name="Plunkett G. III"/>
            <person name="Bloch C.A."/>
            <person name="Perna N.T."/>
            <person name="Burland V."/>
            <person name="Riley M."/>
            <person name="Collado-Vides J."/>
            <person name="Glasner J.D."/>
            <person name="Rode C.K."/>
            <person name="Mayhew G.F."/>
            <person name="Gregor J."/>
            <person name="Davis N.W."/>
            <person name="Kirkpatrick H.A."/>
            <person name="Goeden M.A."/>
            <person name="Rose D.J."/>
            <person name="Mau B."/>
            <person name="Shao Y."/>
        </authorList>
    </citation>
    <scope>NUCLEOTIDE SEQUENCE [LARGE SCALE GENOMIC DNA]</scope>
    <source>
        <strain>K12 / MG1655 / ATCC 47076</strain>
    </source>
</reference>
<reference key="5">
    <citation type="journal article" date="2006" name="Mol. Syst. Biol.">
        <title>Highly accurate genome sequences of Escherichia coli K-12 strains MG1655 and W3110.</title>
        <authorList>
            <person name="Hayashi K."/>
            <person name="Morooka N."/>
            <person name="Yamamoto Y."/>
            <person name="Fujita K."/>
            <person name="Isono K."/>
            <person name="Choi S."/>
            <person name="Ohtsubo E."/>
            <person name="Baba T."/>
            <person name="Wanner B.L."/>
            <person name="Mori H."/>
            <person name="Horiuchi T."/>
        </authorList>
    </citation>
    <scope>NUCLEOTIDE SEQUENCE [LARGE SCALE GENOMIC DNA]</scope>
    <source>
        <strain>K12 / W3110 / ATCC 27325 / DSM 5911</strain>
    </source>
</reference>
<reference key="6">
    <citation type="journal article" date="1991" name="J. Biochem.">
        <title>Lysophospholipase L1 from Escherichia coli K-12 overproducer.</title>
        <authorList>
            <person name="Karasawa K."/>
            <person name="Kudo I."/>
            <person name="Kobayashi T."/>
            <person name="Homma H."/>
            <person name="Chiba N."/>
            <person name="Mizushima H."/>
            <person name="Inoue K."/>
            <person name="Nojima S."/>
        </authorList>
    </citation>
    <scope>PROTEIN SEQUENCE OF 27-37</scope>
    <scope>FUNCTION AS A LYSOPHOSPHOLIPASE</scope>
    <scope>CATALYTIC ACTIVITY</scope>
    <scope>ACTIVITY REGULATION</scope>
    <scope>SUBSTRATE SPECIFICITY</scope>
    <scope>SUBUNIT</scope>
    <scope>NOMENCLATURE</scope>
    <source>
        <strain>K12</strain>
    </source>
</reference>
<reference key="7">
    <citation type="journal article" date="1971" name="Eur. J. Biochem.">
        <title>Isolation and some propeties of a proteolytic enzyme from Escherichia coli (protease I).</title>
        <authorList>
            <person name="Pacaud M."/>
            <person name="Uriel J."/>
        </authorList>
    </citation>
    <scope>FUNCTION AS A PROTEASE</scope>
    <scope>BIOPHYSICOCHEMICAL PROPERTIES</scope>
    <scope>ACTIVITY REGULATION</scope>
</reference>
<reference key="8">
    <citation type="journal article" date="1972" name="J. Biol. Chem.">
        <title>Purification and properties of fatty acyl thioesterase I from Escherichia coli.</title>
        <authorList>
            <person name="Bonner W.M."/>
            <person name="Bloch K."/>
        </authorList>
    </citation>
    <scope>FUNCTION AS A THIOESTERASE</scope>
    <scope>CATALYTIC ACTIVITY</scope>
    <scope>BIOPHYSICOCHEMICAL PROPERTIES</scope>
    <scope>ACTIVITY REGULATION</scope>
    <scope>SUBSTRATE SPECIFICITY</scope>
    <scope>SUBUNIT</scope>
</reference>
<reference key="9">
    <citation type="journal article" date="1975" name="J. Biol. Chem.">
        <title>Lysophospholipase of Escherichia coli.</title>
        <authorList>
            <person name="Doi O."/>
            <person name="Nojima S."/>
        </authorList>
    </citation>
    <scope>FUNCTION AS A LYSOPHOSPHOLIPASE</scope>
    <scope>ACTIVITY REGULATION</scope>
    <scope>SUBSTRATE SPECIFICITY</scope>
</reference>
<reference key="10">
    <citation type="journal article" date="1976" name="Eur. J. Biochem.">
        <title>Protease I from Escherichia coli. Some physicochemical properties and substrate specificity.</title>
        <authorList>
            <person name="Pacaud M."/>
            <person name="Sibilli S."/>
            <person name="Bras G."/>
        </authorList>
    </citation>
    <scope>FUNCTION AS A PROTEASE</scope>
    <scope>CATALYTIC ACTIVITY</scope>
    <scope>BIOPHYSICOCHEMICAL PROPERTIES</scope>
    <scope>SUBSTRATE SPECIFICITY</scope>
    <scope>SUBUNIT</scope>
</reference>
<reference key="11">
    <citation type="journal article" date="1994" name="J. Bacteriol.">
        <title>Protease I of Escherichia coli functions as a thioesterase in vivo.</title>
        <authorList>
            <person name="Cho H."/>
            <person name="Cronan J.E. Jr."/>
        </authorList>
    </citation>
    <scope>FUNCTION AS A THIOESTERASE</scope>
    <scope>SUBSTRATE SPECIFICITY</scope>
</reference>
<reference key="12">
    <citation type="journal article" date="1997" name="Biochem. Biophys. Res. Commun.">
        <title>The thioesterase I of Escherichia coli has arylesterase activity and shows stereospecificity for protease substrates.</title>
        <authorList>
            <person name="Lee Y.L."/>
            <person name="Chen J.C."/>
            <person name="Shaw J.F."/>
        </authorList>
    </citation>
    <scope>FUNCTION</scope>
    <scope>CATALYTIC ACTIVITY</scope>
    <scope>BIOPHYSICOCHEMICAL PROPERTIES</scope>
    <scope>SUBSTRATE SPECIFICITY</scope>
</reference>
<reference key="13">
    <citation type="journal article" date="1999" name="J. Biochem.">
        <title>The Escherichia coli pldC gene encoding lysophospholipase L(1) is identical to the apeA and tesA genes encoding protease I and thioesterase I, respectively.</title>
        <authorList>
            <person name="Karasawa K."/>
            <person name="Yokoyama K."/>
            <person name="Setaka M."/>
            <person name="Nojima S."/>
        </authorList>
    </citation>
    <scope>FUNCTION</scope>
    <scope>CATALYTIC ACTIVITY</scope>
    <scope>SUBSTRATE SPECIFICITY</scope>
</reference>
<reference key="14">
    <citation type="journal article" date="2003" name="Biochemistry">
        <title>Sequential structural changes of Escherichia coli thioesterase/protease I in the serial formation of Michaelis and tetrahedral complexes with diethyl p-nitrophenyl phosphate.</title>
        <authorList>
            <person name="Tyukhtenko S.I."/>
            <person name="Litvinchuk A.V."/>
            <person name="Chang C.F."/>
            <person name="Lo Y.C."/>
            <person name="Lee S.J."/>
            <person name="Shaw J.F."/>
            <person name="Liaw Y.C."/>
            <person name="Huang T.H."/>
        </authorList>
    </citation>
    <scope>ACTIVE SITE</scope>
    <scope>BIOPHYSICOCHEMICAL PROPERTIES</scope>
    <scope>ACTIVITY REGULATION</scope>
    <scope>REACTION MECHANISM</scope>
</reference>
<reference key="15">
    <citation type="journal article" date="2006" name="Biochem. J.">
        <title>Functional role of catalytic triad and oxyanion hole-forming residues on enzyme activity of Escherichia coli thioesterase I/protease I/phospholipase L1.</title>
        <authorList>
            <person name="Lee L.-C."/>
            <person name="Lee Y.-L."/>
            <person name="Leu R.-J."/>
            <person name="Shaw J.-F."/>
        </authorList>
    </citation>
    <scope>MUTAGENESIS OF SER-36; GLY-70; ASN-99; ASP-180 AND HIS-183</scope>
    <scope>CATALYTIC ACTIVITY</scope>
    <scope>BIOPHYSICOCHEMICAL PROPERTIES</scope>
    <scope>ACTIVE SITE</scope>
</reference>
<reference key="16">
    <citation type="journal article" date="2003" name="J. Mol. Biol.">
        <title>Crystal structure of Escherichia coli thioesterase I/protease I/lysophospholipase L1: consensus sequence blocks constitute the catalytic center of SGNH-hydrolases through a conserved hydrogen bond network.</title>
        <authorList>
            <person name="Lo Y.-C."/>
            <person name="Lin S.-C."/>
            <person name="Shaw J.-F."/>
            <person name="Liaw Y.-C."/>
        </authorList>
    </citation>
    <scope>X-RAY CRYSTALLOGRAPHY (1.90 ANGSTROMS) OF 27-208 OF WILD-TYPE AND MUTANT PRO-135 IN COMPLEX WITH SUBSTRATE ANALOG</scope>
    <scope>ACTIVE SITE</scope>
    <scope>IDENTIFICATION BY MASS SPECTROMETRY</scope>
    <scope>SUBUNIT</scope>
</reference>
<reference key="17">
    <citation type="journal article" date="2005" name="Biochemistry">
        <title>Substrate specificities of Escherichia coli thioesterase I/protease I/lysophospholipase L1 are governed by its switch loop movement.</title>
        <authorList>
            <person name="Lo Y.-C."/>
            <person name="Lin S.-C."/>
            <person name="Shaw J.-F."/>
            <person name="Liaw Y.-C."/>
        </authorList>
    </citation>
    <scope>X-RAY CRYSTALLOGRAPHY (2.00 ANGSTROMS) OF 27-208 OF WILD-TYPE AND MUTANT PRO-135 IN COMPLEX WITH SUBSTRATE ANALOG</scope>
    <scope>MUTAGENESIS OF LEU-135</scope>
    <scope>ACTIVE SITE</scope>
</reference>
<gene>
    <name evidence="20" type="primary">tesA</name>
    <name evidence="21" type="synonym">apeA</name>
    <name evidence="17" type="synonym">pldC</name>
    <name type="ordered locus">b0494</name>
    <name type="ordered locus">JW0483</name>
</gene>
<protein>
    <recommendedName>
        <fullName evidence="16">Thioesterase 1/protease 1/lysophospholipase L1</fullName>
        <shortName evidence="16">TAP</shortName>
    </recommendedName>
    <alternativeName>
        <fullName evidence="20">Acyl-CoA thioesterase 1</fullName>
        <shortName evidence="20">TESA</shortName>
        <ecNumber evidence="8">3.1.2.2</ecNumber>
    </alternativeName>
    <alternativeName>
        <fullName evidence="20">Acyl-CoA thioesterase I</fullName>
    </alternativeName>
    <alternativeName>
        <fullName evidence="22">Arylesterase</fullName>
        <ecNumber evidence="14">3.1.1.2</ecNumber>
    </alternativeName>
    <alternativeName>
        <fullName evidence="17">Lysophospholipase L1</fullName>
        <ecNumber evidence="24 27">3.1.1.5</ecNumber>
    </alternativeName>
    <alternativeName>
        <fullName evidence="18">Oleoyl-[acyl-carrier-protein] hydrolase</fullName>
        <ecNumber evidence="8">3.1.2.14</ecNumber>
    </alternativeName>
    <alternativeName>
        <fullName evidence="17">Phospholipid degradation C</fullName>
        <shortName evidence="17">Pldc</shortName>
    </alternativeName>
    <alternativeName>
        <fullName evidence="19">Protease 1</fullName>
        <ecNumber evidence="28">3.4.21.-</ecNumber>
    </alternativeName>
    <alternativeName>
        <fullName evidence="19">Protease I</fullName>
    </alternativeName>
    <alternativeName>
        <fullName evidence="15">Thioesterase I/protease I</fullName>
        <shortName evidence="15">TEP-I</shortName>
    </alternativeName>
</protein>
<evidence type="ECO:0000269" key="1">
    <source>
    </source>
</evidence>
<evidence type="ECO:0000269" key="2">
    <source>
    </source>
</evidence>
<evidence type="ECO:0000269" key="3">
    <source>
    </source>
</evidence>
<evidence type="ECO:0000269" key="4">
    <source>
    </source>
</evidence>
<evidence type="ECO:0000269" key="5">
    <source>
    </source>
</evidence>
<evidence type="ECO:0000269" key="6">
    <source>
    </source>
</evidence>
<evidence type="ECO:0000269" key="7">
    <source>
    </source>
</evidence>
<evidence type="ECO:0000269" key="8">
    <source>
    </source>
</evidence>
<evidence type="ECO:0000269" key="9">
    <source>
    </source>
</evidence>
<evidence type="ECO:0000269" key="10">
    <source>
    </source>
</evidence>
<evidence type="ECO:0000269" key="11">
    <source>
    </source>
</evidence>
<evidence type="ECO:0000269" key="12">
    <source>
    </source>
</evidence>
<evidence type="ECO:0000269" key="13">
    <source>
    </source>
</evidence>
<evidence type="ECO:0000269" key="14">
    <source>
    </source>
</evidence>
<evidence type="ECO:0000303" key="15">
    <source>
    </source>
</evidence>
<evidence type="ECO:0000303" key="16">
    <source>
    </source>
</evidence>
<evidence type="ECO:0000303" key="17">
    <source>
    </source>
</evidence>
<evidence type="ECO:0000303" key="18">
    <source>
    </source>
</evidence>
<evidence type="ECO:0000303" key="19">
    <source>
    </source>
</evidence>
<evidence type="ECO:0000303" key="20">
    <source>
    </source>
</evidence>
<evidence type="ECO:0000303" key="21">
    <source>
    </source>
</evidence>
<evidence type="ECO:0000303" key="22">
    <source>
    </source>
</evidence>
<evidence type="ECO:0000305" key="23"/>
<evidence type="ECO:0000305" key="24">
    <source>
    </source>
</evidence>
<evidence type="ECO:0000305" key="25">
    <source>
    </source>
</evidence>
<evidence type="ECO:0000305" key="26">
    <source>
    </source>
</evidence>
<evidence type="ECO:0000305" key="27">
    <source>
    </source>
</evidence>
<evidence type="ECO:0000305" key="28">
    <source>
    </source>
</evidence>
<evidence type="ECO:0000305" key="29">
    <source>
    </source>
</evidence>
<evidence type="ECO:0007829" key="30">
    <source>
        <dbReference type="PDB" id="1IVN"/>
    </source>
</evidence>
<evidence type="ECO:0007829" key="31">
    <source>
        <dbReference type="PDB" id="5TIF"/>
    </source>
</evidence>
<sequence length="208" mass="23622">MMNFNNVFRWHLPFLFLVLLTFRAAAADTLLILGDSLSAGYRMSASAAWPALLNDKWQSKTSVVNASISGDTSQQGLARLPALLKQHQPRWVLVELGGNDGLRGFQPQQTEQTLRQILQDVKAANAEPLLMQIRLPANYGRRYNEAFSAIYPKLAKEFDVPLLPFFMEEVYLKPQWMQDDGIHPNRDAQPFIADWMAKQLQPLVNHDS</sequence>
<feature type="signal peptide" evidence="6 11 13">
    <location>
        <begin position="1"/>
        <end position="26"/>
    </location>
</feature>
<feature type="chain" id="PRO_0000017848" description="Thioesterase 1/protease 1/lysophospholipase L1">
    <location>
        <begin position="27"/>
        <end position="208"/>
    </location>
</feature>
<feature type="active site" description="Nucleophile" evidence="4 5 25 26 29">
    <location>
        <position position="36"/>
    </location>
</feature>
<feature type="active site" evidence="4 5 25 26">
    <location>
        <position position="180"/>
    </location>
</feature>
<feature type="active site" evidence="4 5 25 26">
    <location>
        <position position="183"/>
    </location>
</feature>
<feature type="binding site" evidence="4">
    <location>
        <position position="70"/>
    </location>
    <ligand>
        <name>substrate</name>
    </ligand>
</feature>
<feature type="binding site" evidence="4">
    <location>
        <position position="99"/>
    </location>
    <ligand>
        <name>substrate</name>
    </ligand>
</feature>
<feature type="mutagenesis site" description="Loss of hydrolysis activity." evidence="5">
    <original>S</original>
    <variation>A</variation>
    <location>
        <position position="36"/>
    </location>
</feature>
<feature type="mutagenesis site" description="Retains weak hydrolysis activity." evidence="5">
    <original>G</original>
    <variation>A</variation>
    <location>
        <position position="70"/>
    </location>
</feature>
<feature type="mutagenesis site" description="Retains weak hydrolysis activity." evidence="5">
    <original>N</original>
    <variation>A</variation>
    <location>
        <position position="99"/>
    </location>
</feature>
<feature type="mutagenesis site" description="Abolishes switch loop movement. Lowers activity towards substrates with long acyl chains." evidence="4">
    <original>L</original>
    <variation>P</variation>
    <location>
        <position position="135"/>
    </location>
</feature>
<feature type="mutagenesis site" description="Retains weak hydrolysis activity." evidence="5">
    <original>D</original>
    <variation>A</variation>
    <location>
        <position position="180"/>
    </location>
</feature>
<feature type="mutagenesis site" description="Loss of hydrolysis activity." evidence="5">
    <original>H</original>
    <variation>A</variation>
    <location>
        <position position="183"/>
    </location>
</feature>
<feature type="strand" evidence="31">
    <location>
        <begin position="28"/>
        <end position="35"/>
    </location>
</feature>
<feature type="helix" evidence="31">
    <location>
        <begin position="36"/>
        <end position="39"/>
    </location>
</feature>
<feature type="strand" evidence="30">
    <location>
        <begin position="41"/>
        <end position="43"/>
    </location>
</feature>
<feature type="helix" evidence="31">
    <location>
        <begin position="45"/>
        <end position="47"/>
    </location>
</feature>
<feature type="helix" evidence="31">
    <location>
        <begin position="49"/>
        <end position="57"/>
    </location>
</feature>
<feature type="strand" evidence="31">
    <location>
        <begin position="60"/>
        <end position="67"/>
    </location>
</feature>
<feature type="helix" evidence="31">
    <location>
        <begin position="73"/>
        <end position="87"/>
    </location>
</feature>
<feature type="strand" evidence="31">
    <location>
        <begin position="90"/>
        <end position="95"/>
    </location>
</feature>
<feature type="helix" evidence="31">
    <location>
        <begin position="98"/>
        <end position="102"/>
    </location>
</feature>
<feature type="helix" evidence="31">
    <location>
        <begin position="107"/>
        <end position="123"/>
    </location>
</feature>
<feature type="strand" evidence="31">
    <location>
        <begin position="127"/>
        <end position="131"/>
    </location>
</feature>
<feature type="helix" evidence="30">
    <location>
        <begin position="137"/>
        <end position="139"/>
    </location>
</feature>
<feature type="helix" evidence="31">
    <location>
        <begin position="141"/>
        <end position="158"/>
    </location>
</feature>
<feature type="helix" evidence="31">
    <location>
        <begin position="167"/>
        <end position="171"/>
    </location>
</feature>
<feature type="helix" evidence="31">
    <location>
        <begin position="174"/>
        <end position="176"/>
    </location>
</feature>
<feature type="strand" evidence="31">
    <location>
        <begin position="181"/>
        <end position="184"/>
    </location>
</feature>
<feature type="helix" evidence="31">
    <location>
        <begin position="188"/>
        <end position="204"/>
    </location>
</feature>
<proteinExistence type="evidence at protein level"/>
<comment type="function">
    <text evidence="1 6 7 8 9 10 11 12 13 14">TesA is a multifunctional esterase that can act as a thioesterase, lysophospholipase and protease (PubMed:10423542, PubMed:1864840, PubMed:238979, PubMed:4554913, PubMed:4945109, PubMed:791643, PubMed:8098033, PubMed:8132479, PubMed:8432696, PubMed:9070299). TesA functions as a thioesterase specific for fatty acyl thioesters of greater than ten carbons, with highest activity on palmitoyl-CoA, cis-vaccenoyl-CoA and palmitoleoyl-CoA (PubMed:10423542, PubMed:4554913, PubMed:8098033, PubMed:8132479, PubMed:9070299). TesA also possesses an arylesterase activity towards short acyl-chain aromatic esters such as alpha-naphthyl acetate, alpha-naphthyl butyrate, benzyl acetate and phenyl acetate (PubMed:9070299). Also able to hydrolyze short acyl-chain triacylglycerols such as triacetin and tributyrin, and p-nitrophenyl esters such as p-nitrophenyl hexanoate and p-nitrophenyl butyrate (PubMed:9070299). The protease activity is mainly active on small peptides (PubMed:8432696, PubMed:9070299). TesA is also able to hydrolyze p-nitrophenyl esters of N-substituted amino acids such as N-benzyloxycarbonyl-L-Phe-p-nitrophenyl ester (Z-L-Phe-ONp) and N-benzyloxycarbonyl-L-Tyr-p-nitrophenyl ester (Z-L-Tyr-ONp), however it is unable to hydrolyze N-acetyl-L-Phe ethyl ester and its Tyr analog (PubMed:10423542, PubMed:791643, PubMed:8432696). TesA also hydrolyzes N-benzyloxycarbonyl-L-Phe beta-nitrophenyl ester (Cbz-Phe-ONap) and N-acetyl-DL-Phe-2-naphthyl ester (chymotrypsin-like specificity) (PubMed:4945109, PubMed:8432696). Shows a slow proteolytic activity against denatured casein (PubMed:4945109). The lysophospholipase activity of TesA is able to hydrolyze 1-palmitoyl-sn-glycero-3-phosphocholine, 1-acyl-sn-glycero-3-phosphoglycerol, 1- and 2-acyl-sn-glycero-3-phosphoethanolamine (PubMed:10423542, PubMed:1864840, PubMed:238979).</text>
</comment>
<comment type="catalytic activity">
    <reaction evidence="8 14">
        <text>a fatty acyl-CoA + H2O = a fatty acid + CoA + H(+)</text>
        <dbReference type="Rhea" id="RHEA:16781"/>
        <dbReference type="ChEBI" id="CHEBI:15377"/>
        <dbReference type="ChEBI" id="CHEBI:15378"/>
        <dbReference type="ChEBI" id="CHEBI:28868"/>
        <dbReference type="ChEBI" id="CHEBI:57287"/>
        <dbReference type="ChEBI" id="CHEBI:77636"/>
    </reaction>
    <physiologicalReaction direction="left-to-right" evidence="23">
        <dbReference type="Rhea" id="RHEA:16782"/>
    </physiologicalReaction>
</comment>
<comment type="catalytic activity">
    <reaction evidence="8 14">
        <text>hexadecanoyl-CoA + H2O = hexadecanoate + CoA + H(+)</text>
        <dbReference type="Rhea" id="RHEA:16645"/>
        <dbReference type="ChEBI" id="CHEBI:7896"/>
        <dbReference type="ChEBI" id="CHEBI:15377"/>
        <dbReference type="ChEBI" id="CHEBI:15378"/>
        <dbReference type="ChEBI" id="CHEBI:57287"/>
        <dbReference type="ChEBI" id="CHEBI:57379"/>
        <dbReference type="EC" id="3.1.2.2"/>
    </reaction>
    <physiologicalReaction direction="left-to-right" evidence="23">
        <dbReference type="Rhea" id="RHEA:16646"/>
    </physiologicalReaction>
</comment>
<comment type="catalytic activity">
    <reaction evidence="8">
        <text>(9Z)-hexadecenoyl-CoA + H2O = (9Z)-hexadecenoate + CoA + H(+)</text>
        <dbReference type="Rhea" id="RHEA:40131"/>
        <dbReference type="ChEBI" id="CHEBI:15377"/>
        <dbReference type="ChEBI" id="CHEBI:15378"/>
        <dbReference type="ChEBI" id="CHEBI:32372"/>
        <dbReference type="ChEBI" id="CHEBI:57287"/>
        <dbReference type="ChEBI" id="CHEBI:61540"/>
    </reaction>
    <physiologicalReaction direction="left-to-right" evidence="23">
        <dbReference type="Rhea" id="RHEA:40132"/>
    </physiologicalReaction>
</comment>
<comment type="catalytic activity">
    <reaction evidence="8">
        <text>octadecanoyl-CoA + H2O = octadecanoate + CoA + H(+)</text>
        <dbReference type="Rhea" id="RHEA:30139"/>
        <dbReference type="ChEBI" id="CHEBI:15377"/>
        <dbReference type="ChEBI" id="CHEBI:15378"/>
        <dbReference type="ChEBI" id="CHEBI:25629"/>
        <dbReference type="ChEBI" id="CHEBI:57287"/>
        <dbReference type="ChEBI" id="CHEBI:57394"/>
    </reaction>
    <physiologicalReaction direction="left-to-right" evidence="23">
        <dbReference type="Rhea" id="RHEA:30140"/>
    </physiologicalReaction>
</comment>
<comment type="catalytic activity">
    <reaction evidence="8">
        <text>(9Z)-octadecenoyl-CoA + H2O = (9Z)-octadecenoate + CoA + H(+)</text>
        <dbReference type="Rhea" id="RHEA:40139"/>
        <dbReference type="ChEBI" id="CHEBI:15377"/>
        <dbReference type="ChEBI" id="CHEBI:15378"/>
        <dbReference type="ChEBI" id="CHEBI:30823"/>
        <dbReference type="ChEBI" id="CHEBI:57287"/>
        <dbReference type="ChEBI" id="CHEBI:57387"/>
    </reaction>
    <physiologicalReaction direction="left-to-right" evidence="23">
        <dbReference type="Rhea" id="RHEA:40140"/>
    </physiologicalReaction>
</comment>
<comment type="catalytic activity">
    <reaction evidence="8">
        <text>(9Z)-octadecenoyl-[ACP] + H2O = (9Z)-octadecenoate + holo-[ACP] + H(+)</text>
        <dbReference type="Rhea" id="RHEA:15057"/>
        <dbReference type="Rhea" id="RHEA-COMP:9685"/>
        <dbReference type="Rhea" id="RHEA-COMP:9924"/>
        <dbReference type="ChEBI" id="CHEBI:15377"/>
        <dbReference type="ChEBI" id="CHEBI:15378"/>
        <dbReference type="ChEBI" id="CHEBI:30823"/>
        <dbReference type="ChEBI" id="CHEBI:64479"/>
        <dbReference type="ChEBI" id="CHEBI:78783"/>
        <dbReference type="EC" id="3.1.2.14"/>
    </reaction>
    <physiologicalReaction direction="left-to-right" evidence="23">
        <dbReference type="Rhea" id="RHEA:15058"/>
    </physiologicalReaction>
</comment>
<comment type="catalytic activity">
    <reaction evidence="8">
        <text>(11Z)-octadecenoyl-CoA + H2O = (11Z)-octadecenoate + CoA + H(+)</text>
        <dbReference type="Rhea" id="RHEA:65240"/>
        <dbReference type="ChEBI" id="CHEBI:15377"/>
        <dbReference type="ChEBI" id="CHEBI:15378"/>
        <dbReference type="ChEBI" id="CHEBI:30827"/>
        <dbReference type="ChEBI" id="CHEBI:57287"/>
        <dbReference type="ChEBI" id="CHEBI:75121"/>
    </reaction>
    <physiologicalReaction direction="left-to-right" evidence="23">
        <dbReference type="Rhea" id="RHEA:65241"/>
    </physiologicalReaction>
</comment>
<comment type="catalytic activity">
    <reaction evidence="8">
        <text>tetradecanoyl-CoA + H2O = tetradecanoate + CoA + H(+)</text>
        <dbReference type="Rhea" id="RHEA:40119"/>
        <dbReference type="ChEBI" id="CHEBI:15377"/>
        <dbReference type="ChEBI" id="CHEBI:15378"/>
        <dbReference type="ChEBI" id="CHEBI:30807"/>
        <dbReference type="ChEBI" id="CHEBI:57287"/>
        <dbReference type="ChEBI" id="CHEBI:57385"/>
    </reaction>
    <physiologicalReaction direction="left-to-right" evidence="23">
        <dbReference type="Rhea" id="RHEA:40120"/>
    </physiologicalReaction>
</comment>
<comment type="catalytic activity">
    <reaction evidence="8">
        <text>(5Z,8Z,11Z,14Z)-eicosatetraenoyl-CoA + H2O = (5Z,8Z,11Z,14Z)-eicosatetraenoate + CoA + H(+)</text>
        <dbReference type="Rhea" id="RHEA:40151"/>
        <dbReference type="ChEBI" id="CHEBI:15377"/>
        <dbReference type="ChEBI" id="CHEBI:15378"/>
        <dbReference type="ChEBI" id="CHEBI:32395"/>
        <dbReference type="ChEBI" id="CHEBI:57287"/>
        <dbReference type="ChEBI" id="CHEBI:57368"/>
    </reaction>
    <physiologicalReaction direction="left-to-right" evidence="23">
        <dbReference type="Rhea" id="RHEA:40152"/>
    </physiologicalReaction>
</comment>
<comment type="catalytic activity">
    <reaction evidence="5">
        <text>dodecanoyl-CoA + H2O = dodecanoate + CoA + H(+)</text>
        <dbReference type="Rhea" id="RHEA:30135"/>
        <dbReference type="ChEBI" id="CHEBI:15377"/>
        <dbReference type="ChEBI" id="CHEBI:15378"/>
        <dbReference type="ChEBI" id="CHEBI:18262"/>
        <dbReference type="ChEBI" id="CHEBI:57287"/>
        <dbReference type="ChEBI" id="CHEBI:57375"/>
    </reaction>
    <physiologicalReaction direction="left-to-right" evidence="23">
        <dbReference type="Rhea" id="RHEA:30136"/>
    </physiologicalReaction>
</comment>
<comment type="catalytic activity">
    <reaction evidence="8">
        <text>decanoyl-CoA + H2O = decanoate + CoA + H(+)</text>
        <dbReference type="Rhea" id="RHEA:40059"/>
        <dbReference type="ChEBI" id="CHEBI:15377"/>
        <dbReference type="ChEBI" id="CHEBI:15378"/>
        <dbReference type="ChEBI" id="CHEBI:27689"/>
        <dbReference type="ChEBI" id="CHEBI:57287"/>
        <dbReference type="ChEBI" id="CHEBI:61430"/>
    </reaction>
    <physiologicalReaction direction="left-to-right" evidence="23">
        <dbReference type="Rhea" id="RHEA:40060"/>
    </physiologicalReaction>
</comment>
<comment type="catalytic activity">
    <reaction evidence="8">
        <text>hexanoyl-CoA + H2O = hexanoate + CoA + H(+)</text>
        <dbReference type="Rhea" id="RHEA:40115"/>
        <dbReference type="ChEBI" id="CHEBI:15377"/>
        <dbReference type="ChEBI" id="CHEBI:15378"/>
        <dbReference type="ChEBI" id="CHEBI:17120"/>
        <dbReference type="ChEBI" id="CHEBI:57287"/>
        <dbReference type="ChEBI" id="CHEBI:62620"/>
    </reaction>
    <physiologicalReaction direction="left-to-right" evidence="23">
        <dbReference type="Rhea" id="RHEA:40116"/>
    </physiologicalReaction>
</comment>
<comment type="catalytic activity">
    <reaction evidence="24 27">
        <text>a 1-acyl-sn-glycero-3-phosphocholine + H2O = sn-glycerol 3-phosphocholine + a fatty acid + H(+)</text>
        <dbReference type="Rhea" id="RHEA:15177"/>
        <dbReference type="ChEBI" id="CHEBI:15377"/>
        <dbReference type="ChEBI" id="CHEBI:15378"/>
        <dbReference type="ChEBI" id="CHEBI:16870"/>
        <dbReference type="ChEBI" id="CHEBI:28868"/>
        <dbReference type="ChEBI" id="CHEBI:58168"/>
        <dbReference type="EC" id="3.1.1.5"/>
    </reaction>
</comment>
<comment type="catalytic activity">
    <reaction evidence="14">
        <text>a phenyl acetate + H2O = a phenol + acetate + H(+)</text>
        <dbReference type="Rhea" id="RHEA:17309"/>
        <dbReference type="ChEBI" id="CHEBI:15377"/>
        <dbReference type="ChEBI" id="CHEBI:15378"/>
        <dbReference type="ChEBI" id="CHEBI:30089"/>
        <dbReference type="ChEBI" id="CHEBI:33853"/>
        <dbReference type="ChEBI" id="CHEBI:140310"/>
        <dbReference type="EC" id="3.1.1.2"/>
    </reaction>
</comment>
<comment type="catalytic activity">
    <reaction evidence="5 14">
        <text>a butanoate ester + H2O = an aliphatic alcohol + butanoate + H(+)</text>
        <dbReference type="Rhea" id="RHEA:47348"/>
        <dbReference type="ChEBI" id="CHEBI:2571"/>
        <dbReference type="ChEBI" id="CHEBI:15377"/>
        <dbReference type="ChEBI" id="CHEBI:15378"/>
        <dbReference type="ChEBI" id="CHEBI:17968"/>
        <dbReference type="ChEBI" id="CHEBI:50477"/>
    </reaction>
</comment>
<comment type="catalytic activity">
    <reaction evidence="14">
        <text>a hexanoate ester + H2O = an aliphatic alcohol + hexanoate + H(+)</text>
        <dbReference type="Rhea" id="RHEA:47352"/>
        <dbReference type="ChEBI" id="CHEBI:2571"/>
        <dbReference type="ChEBI" id="CHEBI:15377"/>
        <dbReference type="ChEBI" id="CHEBI:15378"/>
        <dbReference type="ChEBI" id="CHEBI:17120"/>
        <dbReference type="ChEBI" id="CHEBI:87656"/>
    </reaction>
</comment>
<comment type="catalytic activity">
    <reaction evidence="14">
        <text>an octanoate ester + H2O = an aliphatic alcohol + octanoate + H(+)</text>
        <dbReference type="Rhea" id="RHEA:47356"/>
        <dbReference type="ChEBI" id="CHEBI:2571"/>
        <dbReference type="ChEBI" id="CHEBI:15377"/>
        <dbReference type="ChEBI" id="CHEBI:15378"/>
        <dbReference type="ChEBI" id="CHEBI:25646"/>
        <dbReference type="ChEBI" id="CHEBI:87657"/>
    </reaction>
</comment>
<comment type="activity regulation">
    <text evidence="3 6 7 8 9">Thioesterase activity is inhibited by iodoacetamide and photoactivated methylene blue, and slowly inhibited by 2,4-dinitrofluorobenzene (PubMed:4554913). Protease and lysophospholipase activities are inhibited by diisopropylfluorophosphate (DFP) (PubMed:1864840, PubMed:238979, PubMed:4945109). Lysophospholipase activity is inhibited by Fe(2+), Fe(3+) and Al(3+) ions (PubMed:238979). Diethyl p-nitrophenyl phosphate (DENP) irreversibly inhibits both the protease and thioesterase activities (PubMed:12846577).</text>
</comment>
<comment type="biophysicochemical properties">
    <kinetics>
        <KM evidence="14">3.5 uM for N-benzyloxycarbonyl-L-tyrosine-p-nitrophenyl ester</KM>
        <KM evidence="8">3.8 uM for oleoyl-ACP</KM>
        <KM evidence="8">4 uM for oleoyl-CoA</KM>
        <KM evidence="8">4 uM for palmitoleoyl-CoA</KM>
        <KM evidence="8">4.6 uM for cis-vaccenoyl-CoA</KM>
        <KM evidence="8">6.2 uM for palmitoyl-CoA</KM>
        <KM evidence="8">6.4 uM for myristoyl-CoA</KM>
        <KM evidence="14">7.2 uM for palmitoyl-CoA</KM>
        <KM evidence="8">7.7 uM for stearoyl-CoA</KM>
        <KM evidence="8">9.9 uM for arachidonoyl-CoA</KM>
        <KM evidence="8">11.5 uM for decanoyl-CoA</KM>
        <KM evidence="14">13.2 uM for N-benzyloxycarbonyl-D-tyrosine-p-nitrophenyl ester</KM>
        <KM evidence="8">27.3 uM for hexanoyl-CoA</KM>
        <KM evidence="8">110 uM for oleoyl pantetheine</KM>
        <KM evidence="5">146 uM for lauroyl-CoA (at pH 7 and 37 degrees Celsius)</KM>
        <KM evidence="5">174 uM for N-carbobenzoxy-L-tyrosine p-nitrophenyl ester (at pH 7 and 37 degrees Celsius)</KM>
        <KM evidence="10">200 uM for N-benzyloxycarbonyl-L-tyrosine-p-nitrophenyl ester</KM>
        <KM evidence="3">730 uM for diethyl p-nitrophenyl phosphate</KM>
        <KM evidence="14">617.8 uM for p-nitrophenyl decanoate</KM>
        <KM evidence="5">870 uM for p-nitrophenyl butyrate (at pH 7 and 37 degrees Celsius)</KM>
        <KM evidence="14">1.46 mM for p-nitrophenyl butyrate</KM>
        <Vmax evidence="10">25.0 umol/min/mg enzyme with N-benzyloxycarbonyl-L-tyrosine-p-nitrophenyl ester as substrate</Vmax>
        <Vmax evidence="3">0.33 umol/min/mg enzyme with diethyl p-nitrophenyl phosphate as substrate</Vmax>
        <Vmax evidence="8">30.1 pmol/min/mg enzyme with palmitoyl-CoA as substrate</Vmax>
        <Vmax evidence="8">20.9 pmol/min/mg enzyme with myristoyl-CoA as substrate</Vmax>
        <Vmax evidence="8">19.7 pmol/min/mg enzyme with stearoyl-CoA as substrate</Vmax>
        <Vmax evidence="8">19.3 pmol/min/mg enzyme with cis-vaccenoyl-CoA as substrate</Vmax>
        <Vmax evidence="8">17.0 pmol/min/mg enzyme with arachidonoyl-CoA as substrate</Vmax>
        <Vmax evidence="8">15.7 pmol/min/mg enzyme with palmitoleoyl-CoA as substrate</Vmax>
        <Vmax evidence="8">14.0 pmol/min/mg enzyme with oleoyl-CoA as substrate</Vmax>
        <Vmax evidence="8">9.6 pmol/min/mg enzyme with decanoyl-CoA as substrate</Vmax>
        <Vmax evidence="8">7.7 pmol/min/mg enzyme with hexanoyl-CoA as substrate</Vmax>
        <Vmax evidence="8">7.6 pmol/min/mg enzyme with oleoyl pantetheine as substrate</Vmax>
        <Vmax evidence="8">0.4 pmol/min/mg enzyme with oleoyl-ACP as substrate</Vmax>
        <text evidence="5 14">kcat is 88.99 sec(-1) for N-benzyloxycarbonyl-L-tyrosine-p-nitrophenyl ester as substrate (PubMed:16515533). kcat is 62.4 sec(-1) for p-nitrophenyl butyrate as substrate (PubMed:9070299). kcat is 15.29 sec(-1) for p-nitrophenyl butyrate as substrate (PubMed:16515533). kcat is 14.1 sec(-1) for N-benzyloxycarbonyl-L-tyrosine-p-nitrophenyl ester as substrate (PubMed:9070299). kcat is 10.13 sec(-1) for lauroyl-CoA as substrate (PubMed:16515533). kcat is 5.1 sec(-1) for p-nitrophenyl decanoate as substrate (PubMed:9070299). kcat is 2.6 sec(-1) for palmitoyl-CoA as substrate (PubMed:9070299). kcat is 2.3 sec(-1) for N-benzyloxycarbonyl-D-tyrosine-p-nitrophenyl ester as substrate (PubMed:9070299).</text>
    </kinetics>
    <phDependence>
        <text evidence="3 8 9">Optimum pH is 7.5-8.4 (PubMed:12846577, PubMed:4554913, PubMed:4945109). Stable between pH 6.1 and 12, however, below pH 6.0, thioesterase rapidly loses activity (PubMed:4554913).</text>
    </phDependence>
    <temperatureDependence>
        <text evidence="9">Protease is stable up to 50 degrees Celsius.</text>
    </temperatureDependence>
</comment>
<comment type="subunit">
    <text evidence="2 6 8 10 11">Monomer or homotetramer.</text>
</comment>
<comment type="subcellular location">
    <subcellularLocation>
        <location evidence="11 13">Periplasm</location>
    </subcellularLocation>
</comment>
<comment type="disruption phenotype">
    <text evidence="11 13">Cells lacking this gene do not show thioesterase activity and have a little protease activity against Cbz-Phe-ONap. No effect on the cell growth and fatty acid composition.</text>
</comment>
<comment type="similarity">
    <text evidence="23">Belongs to the 'GDSL' lipolytic enzyme family.</text>
</comment>
<comment type="sequence caution" evidence="23">
    <conflict type="erroneous initiation">
        <sequence resource="EMBL-CDS" id="AAB40248"/>
    </conflict>
    <text>Extended N-terminus.</text>
</comment>
<keyword id="KW-0002">3D-structure</keyword>
<keyword id="KW-0903">Direct protein sequencing</keyword>
<keyword id="KW-0378">Hydrolase</keyword>
<keyword id="KW-0443">Lipid metabolism</keyword>
<keyword id="KW-0574">Periplasm</keyword>
<keyword id="KW-0645">Protease</keyword>
<keyword id="KW-1185">Reference proteome</keyword>
<keyword id="KW-0732">Signal</keyword>